<protein>
    <recommendedName>
        <fullName evidence="1">Elongation factor 4</fullName>
        <shortName evidence="1">EF-4</shortName>
        <ecNumber evidence="1">3.6.5.n1</ecNumber>
    </recommendedName>
    <alternativeName>
        <fullName evidence="1">Ribosomal back-translocase LepA</fullName>
    </alternativeName>
</protein>
<reference key="1">
    <citation type="journal article" date="2003" name="Nucleic Acids Res.">
        <title>The complete genome sequence and analysis of Corynebacterium diphtheriae NCTC13129.</title>
        <authorList>
            <person name="Cerdeno-Tarraga A.-M."/>
            <person name="Efstratiou A."/>
            <person name="Dover L.G."/>
            <person name="Holden M.T.G."/>
            <person name="Pallen M.J."/>
            <person name="Bentley S.D."/>
            <person name="Besra G.S."/>
            <person name="Churcher C.M."/>
            <person name="James K.D."/>
            <person name="De Zoysa A."/>
            <person name="Chillingworth T."/>
            <person name="Cronin A."/>
            <person name="Dowd L."/>
            <person name="Feltwell T."/>
            <person name="Hamlin N."/>
            <person name="Holroyd S."/>
            <person name="Jagels K."/>
            <person name="Moule S."/>
            <person name="Quail M.A."/>
            <person name="Rabbinowitsch E."/>
            <person name="Rutherford K.M."/>
            <person name="Thomson N.R."/>
            <person name="Unwin L."/>
            <person name="Whitehead S."/>
            <person name="Barrell B.G."/>
            <person name="Parkhill J."/>
        </authorList>
    </citation>
    <scope>NUCLEOTIDE SEQUENCE [LARGE SCALE GENOMIC DNA]</scope>
    <source>
        <strain>ATCC 700971 / NCTC 13129 / Biotype gravis</strain>
    </source>
</reference>
<name>LEPA_CORDI</name>
<organism>
    <name type="scientific">Corynebacterium diphtheriae (strain ATCC 700971 / NCTC 13129 / Biotype gravis)</name>
    <dbReference type="NCBI Taxonomy" id="257309"/>
    <lineage>
        <taxon>Bacteria</taxon>
        <taxon>Bacillati</taxon>
        <taxon>Actinomycetota</taxon>
        <taxon>Actinomycetes</taxon>
        <taxon>Mycobacteriales</taxon>
        <taxon>Corynebacteriaceae</taxon>
        <taxon>Corynebacterium</taxon>
    </lineage>
</organism>
<feature type="chain" id="PRO_0000176264" description="Elongation factor 4">
    <location>
        <begin position="1"/>
        <end position="615"/>
    </location>
</feature>
<feature type="domain" description="tr-type G">
    <location>
        <begin position="14"/>
        <end position="200"/>
    </location>
</feature>
<feature type="binding site" evidence="1">
    <location>
        <begin position="26"/>
        <end position="31"/>
    </location>
    <ligand>
        <name>GTP</name>
        <dbReference type="ChEBI" id="CHEBI:37565"/>
    </ligand>
</feature>
<feature type="binding site" evidence="1">
    <location>
        <begin position="147"/>
        <end position="150"/>
    </location>
    <ligand>
        <name>GTP</name>
        <dbReference type="ChEBI" id="CHEBI:37565"/>
    </ligand>
</feature>
<proteinExistence type="inferred from homology"/>
<evidence type="ECO:0000255" key="1">
    <source>
        <dbReference type="HAMAP-Rule" id="MF_00071"/>
    </source>
</evidence>
<sequence length="615" mass="68640">MAEKFAEKTFTDPQQIRNFCIIAHIDHGKSTLADRILQLSNVVDARDMRDQYLDNMDIERERGITIKAQNVRLPWIPRTGPYAGEQIVMQMIDTPGHVDFTYEVSRALEACEGAILLVDAAQGIEAQTLANLYLAMENDLEIIPVLNKIDLPAADPEKYSLEIANIIGCEPEDVLRVSGKTGEGVEELLDKVAELIPAPTTDYPDDAPARAMIFDSVYDTYRGVVTYIRMIDGKLTPRQKIKMMSTGAVHELLEIGIVSPTPKKCSGLGPGEVGYLITGVKDVRQSKVGDTVTWAHNGAEEALQGYEEPKPMVYSGLFPISQADFPDLRDALEKLQLNDASLTYEPETSVALGFGFRCGFLGLLHMEITRDRLQREFDLDLISTAPSVNYRVVAEDGSEHRVHNPSDWPAGKLREVYEPIVKTTIIVPSDFVGTTMELCQTKRGQMDGMDYLSEDRVELRYTMPLGEIIFDFFDQLKSRTKGYASLNYEEAGEQLADLVKVDILLQGDPVDAFSAIVHRDNAQWYGNKMTKKLKELIPRQQFEVPVQAAIGSKVIARENIRALRKDVLAKCYGGDISRKRKLLEKQKEGKKRMKNIGSVSVPQEAFVAALSTDEG</sequence>
<keyword id="KW-1003">Cell membrane</keyword>
<keyword id="KW-0342">GTP-binding</keyword>
<keyword id="KW-0378">Hydrolase</keyword>
<keyword id="KW-0472">Membrane</keyword>
<keyword id="KW-0547">Nucleotide-binding</keyword>
<keyword id="KW-0648">Protein biosynthesis</keyword>
<keyword id="KW-1185">Reference proteome</keyword>
<dbReference type="EC" id="3.6.5.n1" evidence="1"/>
<dbReference type="EMBL" id="BX248359">
    <property type="protein sequence ID" value="CAE50294.1"/>
    <property type="molecule type" value="Genomic_DNA"/>
</dbReference>
<dbReference type="RefSeq" id="WP_003852416.1">
    <property type="nucleotide sequence ID" value="NC_002935.2"/>
</dbReference>
<dbReference type="SMR" id="P60931"/>
<dbReference type="STRING" id="257309.DIP1764"/>
<dbReference type="KEGG" id="cdi:DIP1764"/>
<dbReference type="HOGENOM" id="CLU_009995_3_3_11"/>
<dbReference type="Proteomes" id="UP000002198">
    <property type="component" value="Chromosome"/>
</dbReference>
<dbReference type="GO" id="GO:0005886">
    <property type="term" value="C:plasma membrane"/>
    <property type="evidence" value="ECO:0007669"/>
    <property type="project" value="UniProtKB-SubCell"/>
</dbReference>
<dbReference type="GO" id="GO:0005525">
    <property type="term" value="F:GTP binding"/>
    <property type="evidence" value="ECO:0007669"/>
    <property type="project" value="UniProtKB-UniRule"/>
</dbReference>
<dbReference type="GO" id="GO:0003924">
    <property type="term" value="F:GTPase activity"/>
    <property type="evidence" value="ECO:0007669"/>
    <property type="project" value="UniProtKB-UniRule"/>
</dbReference>
<dbReference type="GO" id="GO:0043022">
    <property type="term" value="F:ribosome binding"/>
    <property type="evidence" value="ECO:0007669"/>
    <property type="project" value="UniProtKB-UniRule"/>
</dbReference>
<dbReference type="GO" id="GO:0003746">
    <property type="term" value="F:translation elongation factor activity"/>
    <property type="evidence" value="ECO:0007669"/>
    <property type="project" value="UniProtKB-UniRule"/>
</dbReference>
<dbReference type="GO" id="GO:0045727">
    <property type="term" value="P:positive regulation of translation"/>
    <property type="evidence" value="ECO:0007669"/>
    <property type="project" value="UniProtKB-UniRule"/>
</dbReference>
<dbReference type="CDD" id="cd03699">
    <property type="entry name" value="EF4_II"/>
    <property type="match status" value="1"/>
</dbReference>
<dbReference type="CDD" id="cd16260">
    <property type="entry name" value="EF4_III"/>
    <property type="match status" value="1"/>
</dbReference>
<dbReference type="CDD" id="cd01890">
    <property type="entry name" value="LepA"/>
    <property type="match status" value="1"/>
</dbReference>
<dbReference type="CDD" id="cd03709">
    <property type="entry name" value="lepA_C"/>
    <property type="match status" value="1"/>
</dbReference>
<dbReference type="FunFam" id="3.30.70.240:FF:000011">
    <property type="entry name" value="Elongation factor 4"/>
    <property type="match status" value="1"/>
</dbReference>
<dbReference type="FunFam" id="3.40.50.300:FF:000078">
    <property type="entry name" value="Elongation factor 4"/>
    <property type="match status" value="1"/>
</dbReference>
<dbReference type="FunFam" id="2.40.30.10:FF:000015">
    <property type="entry name" value="Translation factor GUF1, mitochondrial"/>
    <property type="match status" value="1"/>
</dbReference>
<dbReference type="FunFam" id="3.30.70.2570:FF:000001">
    <property type="entry name" value="Translation factor GUF1, mitochondrial"/>
    <property type="match status" value="1"/>
</dbReference>
<dbReference type="FunFam" id="3.30.70.870:FF:000004">
    <property type="entry name" value="Translation factor GUF1, mitochondrial"/>
    <property type="match status" value="1"/>
</dbReference>
<dbReference type="Gene3D" id="3.30.70.240">
    <property type="match status" value="1"/>
</dbReference>
<dbReference type="Gene3D" id="3.30.70.2570">
    <property type="entry name" value="Elongation factor 4, C-terminal domain"/>
    <property type="match status" value="1"/>
</dbReference>
<dbReference type="Gene3D" id="3.30.70.870">
    <property type="entry name" value="Elongation Factor G (Translational Gtpase), domain 3"/>
    <property type="match status" value="1"/>
</dbReference>
<dbReference type="Gene3D" id="3.40.50.300">
    <property type="entry name" value="P-loop containing nucleotide triphosphate hydrolases"/>
    <property type="match status" value="1"/>
</dbReference>
<dbReference type="Gene3D" id="2.40.30.10">
    <property type="entry name" value="Translation factors"/>
    <property type="match status" value="1"/>
</dbReference>
<dbReference type="HAMAP" id="MF_00071">
    <property type="entry name" value="LepA"/>
    <property type="match status" value="1"/>
</dbReference>
<dbReference type="InterPro" id="IPR006297">
    <property type="entry name" value="EF-4"/>
</dbReference>
<dbReference type="InterPro" id="IPR035647">
    <property type="entry name" value="EFG_III/V"/>
</dbReference>
<dbReference type="InterPro" id="IPR000640">
    <property type="entry name" value="EFG_V-like"/>
</dbReference>
<dbReference type="InterPro" id="IPR004161">
    <property type="entry name" value="EFTu-like_2"/>
</dbReference>
<dbReference type="InterPro" id="IPR031157">
    <property type="entry name" value="G_TR_CS"/>
</dbReference>
<dbReference type="InterPro" id="IPR038363">
    <property type="entry name" value="LepA_C_sf"/>
</dbReference>
<dbReference type="InterPro" id="IPR013842">
    <property type="entry name" value="LepA_CTD"/>
</dbReference>
<dbReference type="InterPro" id="IPR035654">
    <property type="entry name" value="LepA_IV"/>
</dbReference>
<dbReference type="InterPro" id="IPR027417">
    <property type="entry name" value="P-loop_NTPase"/>
</dbReference>
<dbReference type="InterPro" id="IPR005225">
    <property type="entry name" value="Small_GTP-bd"/>
</dbReference>
<dbReference type="InterPro" id="IPR000795">
    <property type="entry name" value="T_Tr_GTP-bd_dom"/>
</dbReference>
<dbReference type="InterPro" id="IPR009000">
    <property type="entry name" value="Transl_B-barrel_sf"/>
</dbReference>
<dbReference type="NCBIfam" id="TIGR01393">
    <property type="entry name" value="lepA"/>
    <property type="match status" value="1"/>
</dbReference>
<dbReference type="NCBIfam" id="TIGR00231">
    <property type="entry name" value="small_GTP"/>
    <property type="match status" value="1"/>
</dbReference>
<dbReference type="PANTHER" id="PTHR43512:SF4">
    <property type="entry name" value="TRANSLATION FACTOR GUF1 HOMOLOG, CHLOROPLASTIC"/>
    <property type="match status" value="1"/>
</dbReference>
<dbReference type="PANTHER" id="PTHR43512">
    <property type="entry name" value="TRANSLATION FACTOR GUF1-RELATED"/>
    <property type="match status" value="1"/>
</dbReference>
<dbReference type="Pfam" id="PF00679">
    <property type="entry name" value="EFG_C"/>
    <property type="match status" value="1"/>
</dbReference>
<dbReference type="Pfam" id="PF00009">
    <property type="entry name" value="GTP_EFTU"/>
    <property type="match status" value="1"/>
</dbReference>
<dbReference type="Pfam" id="PF03144">
    <property type="entry name" value="GTP_EFTU_D2"/>
    <property type="match status" value="1"/>
</dbReference>
<dbReference type="Pfam" id="PF06421">
    <property type="entry name" value="LepA_C"/>
    <property type="match status" value="1"/>
</dbReference>
<dbReference type="PRINTS" id="PR00315">
    <property type="entry name" value="ELONGATNFCT"/>
</dbReference>
<dbReference type="SMART" id="SM00838">
    <property type="entry name" value="EFG_C"/>
    <property type="match status" value="1"/>
</dbReference>
<dbReference type="SUPFAM" id="SSF54980">
    <property type="entry name" value="EF-G C-terminal domain-like"/>
    <property type="match status" value="2"/>
</dbReference>
<dbReference type="SUPFAM" id="SSF52540">
    <property type="entry name" value="P-loop containing nucleoside triphosphate hydrolases"/>
    <property type="match status" value="1"/>
</dbReference>
<dbReference type="SUPFAM" id="SSF50447">
    <property type="entry name" value="Translation proteins"/>
    <property type="match status" value="1"/>
</dbReference>
<dbReference type="PROSITE" id="PS00301">
    <property type="entry name" value="G_TR_1"/>
    <property type="match status" value="1"/>
</dbReference>
<dbReference type="PROSITE" id="PS51722">
    <property type="entry name" value="G_TR_2"/>
    <property type="match status" value="1"/>
</dbReference>
<comment type="function">
    <text evidence="1">Required for accurate and efficient protein synthesis under certain stress conditions. May act as a fidelity factor of the translation reaction, by catalyzing a one-codon backward translocation of tRNAs on improperly translocated ribosomes. Back-translocation proceeds from a post-translocation (POST) complex to a pre-translocation (PRE) complex, thus giving elongation factor G a second chance to translocate the tRNAs correctly. Binds to ribosomes in a GTP-dependent manner.</text>
</comment>
<comment type="catalytic activity">
    <reaction evidence="1">
        <text>GTP + H2O = GDP + phosphate + H(+)</text>
        <dbReference type="Rhea" id="RHEA:19669"/>
        <dbReference type="ChEBI" id="CHEBI:15377"/>
        <dbReference type="ChEBI" id="CHEBI:15378"/>
        <dbReference type="ChEBI" id="CHEBI:37565"/>
        <dbReference type="ChEBI" id="CHEBI:43474"/>
        <dbReference type="ChEBI" id="CHEBI:58189"/>
        <dbReference type="EC" id="3.6.5.n1"/>
    </reaction>
</comment>
<comment type="subcellular location">
    <subcellularLocation>
        <location evidence="1">Cell membrane</location>
        <topology evidence="1">Peripheral membrane protein</topology>
        <orientation evidence="1">Cytoplasmic side</orientation>
    </subcellularLocation>
</comment>
<comment type="similarity">
    <text evidence="1">Belongs to the TRAFAC class translation factor GTPase superfamily. Classic translation factor GTPase family. LepA subfamily.</text>
</comment>
<gene>
    <name evidence="1" type="primary">lepA</name>
    <name type="ordered locus">DIP1764</name>
</gene>
<accession>P60931</accession>